<organism>
    <name type="scientific">Arabidopsis thaliana</name>
    <name type="common">Mouse-ear cress</name>
    <dbReference type="NCBI Taxonomy" id="3702"/>
    <lineage>
        <taxon>Eukaryota</taxon>
        <taxon>Viridiplantae</taxon>
        <taxon>Streptophyta</taxon>
        <taxon>Embryophyta</taxon>
        <taxon>Tracheophyta</taxon>
        <taxon>Spermatophyta</taxon>
        <taxon>Magnoliopsida</taxon>
        <taxon>eudicotyledons</taxon>
        <taxon>Gunneridae</taxon>
        <taxon>Pentapetalae</taxon>
        <taxon>rosids</taxon>
        <taxon>malvids</taxon>
        <taxon>Brassicales</taxon>
        <taxon>Brassicaceae</taxon>
        <taxon>Camelineae</taxon>
        <taxon>Arabidopsis</taxon>
    </lineage>
</organism>
<keyword id="KW-0067">ATP-binding</keyword>
<keyword id="KW-0927">Auxin signaling pathway</keyword>
<keyword id="KW-0963">Cytoplasm</keyword>
<keyword id="KW-0217">Developmental protein</keyword>
<keyword id="KW-0341">Growth regulation</keyword>
<keyword id="KW-0418">Kinase</keyword>
<keyword id="KW-0547">Nucleotide-binding</keyword>
<keyword id="KW-1185">Reference proteome</keyword>
<keyword id="KW-0723">Serine/threonine-protein kinase</keyword>
<keyword id="KW-0808">Transferase</keyword>
<protein>
    <recommendedName>
        <fullName>Serine/threonine-protein kinase WAG2</fullName>
        <ecNumber>2.7.11.1</ecNumber>
    </recommendedName>
</protein>
<dbReference type="EC" id="2.7.11.1"/>
<dbReference type="EMBL" id="AB022220">
    <property type="protein sequence ID" value="BAB01042.1"/>
    <property type="molecule type" value="Genomic_DNA"/>
</dbReference>
<dbReference type="EMBL" id="CP002686">
    <property type="protein sequence ID" value="AEE75509.1"/>
    <property type="molecule type" value="Genomic_DNA"/>
</dbReference>
<dbReference type="EMBL" id="BT029242">
    <property type="protein sequence ID" value="ABJ98574.1"/>
    <property type="molecule type" value="mRNA"/>
</dbReference>
<dbReference type="EMBL" id="AY088832">
    <property type="protein sequence ID" value="AAM67139.1"/>
    <property type="molecule type" value="mRNA"/>
</dbReference>
<dbReference type="RefSeq" id="NP_188054.1">
    <property type="nucleotide sequence ID" value="NM_112295.4"/>
</dbReference>
<dbReference type="SMR" id="Q9LUL2"/>
<dbReference type="FunCoup" id="Q9LUL2">
    <property type="interactions" value="34"/>
</dbReference>
<dbReference type="IntAct" id="Q9LUL2">
    <property type="interactions" value="1"/>
</dbReference>
<dbReference type="STRING" id="3702.Q9LUL2"/>
<dbReference type="iPTMnet" id="Q9LUL2"/>
<dbReference type="PaxDb" id="3702-AT3G14370.1"/>
<dbReference type="ProteomicsDB" id="242781"/>
<dbReference type="EnsemblPlants" id="AT3G14370.1">
    <property type="protein sequence ID" value="AT3G14370.1"/>
    <property type="gene ID" value="AT3G14370"/>
</dbReference>
<dbReference type="GeneID" id="820658"/>
<dbReference type="Gramene" id="AT3G14370.1">
    <property type="protein sequence ID" value="AT3G14370.1"/>
    <property type="gene ID" value="AT3G14370"/>
</dbReference>
<dbReference type="KEGG" id="ath:AT3G14370"/>
<dbReference type="Araport" id="AT3G14370"/>
<dbReference type="TAIR" id="AT3G14370">
    <property type="gene designation" value="WAG2"/>
</dbReference>
<dbReference type="eggNOG" id="KOG0610">
    <property type="taxonomic scope" value="Eukaryota"/>
</dbReference>
<dbReference type="HOGENOM" id="CLU_000288_63_30_1"/>
<dbReference type="InParanoid" id="Q9LUL2"/>
<dbReference type="OMA" id="NHRRHDP"/>
<dbReference type="PhylomeDB" id="Q9LUL2"/>
<dbReference type="PRO" id="PR:Q9LUL2"/>
<dbReference type="Proteomes" id="UP000006548">
    <property type="component" value="Chromosome 3"/>
</dbReference>
<dbReference type="ExpressionAtlas" id="Q9LUL2">
    <property type="expression patterns" value="baseline and differential"/>
</dbReference>
<dbReference type="GO" id="GO:0005829">
    <property type="term" value="C:cytosol"/>
    <property type="evidence" value="ECO:0007669"/>
    <property type="project" value="UniProtKB-SubCell"/>
</dbReference>
<dbReference type="GO" id="GO:0005524">
    <property type="term" value="F:ATP binding"/>
    <property type="evidence" value="ECO:0007669"/>
    <property type="project" value="UniProtKB-KW"/>
</dbReference>
<dbReference type="GO" id="GO:0016301">
    <property type="term" value="F:kinase activity"/>
    <property type="evidence" value="ECO:0000250"/>
    <property type="project" value="TAIR"/>
</dbReference>
<dbReference type="GO" id="GO:0106310">
    <property type="term" value="F:protein serine kinase activity"/>
    <property type="evidence" value="ECO:0007669"/>
    <property type="project" value="RHEA"/>
</dbReference>
<dbReference type="GO" id="GO:0004674">
    <property type="term" value="F:protein serine/threonine kinase activity"/>
    <property type="evidence" value="ECO:0000250"/>
    <property type="project" value="TAIR"/>
</dbReference>
<dbReference type="GO" id="GO:0009926">
    <property type="term" value="P:auxin polar transport"/>
    <property type="evidence" value="ECO:0000315"/>
    <property type="project" value="TAIR"/>
</dbReference>
<dbReference type="GO" id="GO:0009734">
    <property type="term" value="P:auxin-activated signaling pathway"/>
    <property type="evidence" value="ECO:0007669"/>
    <property type="project" value="UniProtKB-KW"/>
</dbReference>
<dbReference type="GO" id="GO:0048825">
    <property type="term" value="P:cotyledon development"/>
    <property type="evidence" value="ECO:0000316"/>
    <property type="project" value="TAIR"/>
</dbReference>
<dbReference type="CDD" id="cd05574">
    <property type="entry name" value="STKc_phototropin_like"/>
    <property type="match status" value="1"/>
</dbReference>
<dbReference type="FunFam" id="1.10.510.10:FF:000312">
    <property type="entry name" value="Serine/threonine-protein kinase OXI1"/>
    <property type="match status" value="1"/>
</dbReference>
<dbReference type="FunFam" id="1.10.510.10:FF:000662">
    <property type="entry name" value="Serine/threonine-protein kinase WAG2"/>
    <property type="match status" value="1"/>
</dbReference>
<dbReference type="Gene3D" id="3.30.200.20">
    <property type="entry name" value="Phosphorylase Kinase, domain 1"/>
    <property type="match status" value="1"/>
</dbReference>
<dbReference type="Gene3D" id="1.10.510.10">
    <property type="entry name" value="Transferase(Phosphotransferase) domain 1"/>
    <property type="match status" value="2"/>
</dbReference>
<dbReference type="InterPro" id="IPR011009">
    <property type="entry name" value="Kinase-like_dom_sf"/>
</dbReference>
<dbReference type="InterPro" id="IPR000719">
    <property type="entry name" value="Prot_kinase_dom"/>
</dbReference>
<dbReference type="InterPro" id="IPR008271">
    <property type="entry name" value="Ser/Thr_kinase_AS"/>
</dbReference>
<dbReference type="PANTHER" id="PTHR45637">
    <property type="entry name" value="FLIPPASE KINASE 1-RELATED"/>
    <property type="match status" value="1"/>
</dbReference>
<dbReference type="Pfam" id="PF00069">
    <property type="entry name" value="Pkinase"/>
    <property type="match status" value="2"/>
</dbReference>
<dbReference type="SMART" id="SM00220">
    <property type="entry name" value="S_TKc"/>
    <property type="match status" value="1"/>
</dbReference>
<dbReference type="SUPFAM" id="SSF56112">
    <property type="entry name" value="Protein kinase-like (PK-like)"/>
    <property type="match status" value="1"/>
</dbReference>
<dbReference type="PROSITE" id="PS50011">
    <property type="entry name" value="PROTEIN_KINASE_DOM"/>
    <property type="match status" value="1"/>
</dbReference>
<dbReference type="PROSITE" id="PS00108">
    <property type="entry name" value="PROTEIN_KINASE_ST"/>
    <property type="match status" value="1"/>
</dbReference>
<gene>
    <name type="primary">WAG2</name>
    <name type="ordered locus">At3g14370</name>
    <name type="ORF">MLN21.15</name>
</gene>
<accession>Q9LUL2</accession>
<evidence type="ECO:0000255" key="1">
    <source>
        <dbReference type="PROSITE-ProRule" id="PRU00159"/>
    </source>
</evidence>
<evidence type="ECO:0000255" key="2">
    <source>
        <dbReference type="PROSITE-ProRule" id="PRU10027"/>
    </source>
</evidence>
<evidence type="ECO:0000269" key="3">
    <source>
    </source>
</evidence>
<evidence type="ECO:0000269" key="4">
    <source>
    </source>
</evidence>
<evidence type="ECO:0000269" key="5">
    <source>
    </source>
</evidence>
<evidence type="ECO:0000305" key="6">
    <source>
    </source>
</evidence>
<proteinExistence type="evidence at transcript level"/>
<feature type="chain" id="PRO_0000425535" description="Serine/threonine-protein kinase WAG2">
    <location>
        <begin position="1"/>
        <end position="480"/>
    </location>
</feature>
<feature type="domain" description="Protein kinase" evidence="1">
    <location>
        <begin position="88"/>
        <end position="396"/>
    </location>
</feature>
<feature type="active site" description="Proton acceptor" evidence="1 2">
    <location>
        <position position="213"/>
    </location>
</feature>
<feature type="binding site" evidence="1">
    <location>
        <begin position="94"/>
        <end position="102"/>
    </location>
    <ligand>
        <name>ATP</name>
        <dbReference type="ChEBI" id="CHEBI:30616"/>
    </ligand>
</feature>
<feature type="binding site" evidence="1">
    <location>
        <position position="117"/>
    </location>
    <ligand>
        <name>ATP</name>
        <dbReference type="ChEBI" id="CHEBI:30616"/>
    </ligand>
</feature>
<reference key="1">
    <citation type="journal article" date="2000" name="DNA Res.">
        <title>Structural analysis of Arabidopsis thaliana chromosome 3. I. Sequence features of the regions of 4,504,864 bp covered by sixty P1 and TAC clones.</title>
        <authorList>
            <person name="Sato S."/>
            <person name="Nakamura Y."/>
            <person name="Kaneko T."/>
            <person name="Katoh T."/>
            <person name="Asamizu E."/>
            <person name="Tabata S."/>
        </authorList>
    </citation>
    <scope>NUCLEOTIDE SEQUENCE [LARGE SCALE GENOMIC DNA]</scope>
    <source>
        <strain>cv. Columbia</strain>
    </source>
</reference>
<reference key="2">
    <citation type="journal article" date="2017" name="Plant J.">
        <title>Araport11: a complete reannotation of the Arabidopsis thaliana reference genome.</title>
        <authorList>
            <person name="Cheng C.Y."/>
            <person name="Krishnakumar V."/>
            <person name="Chan A.P."/>
            <person name="Thibaud-Nissen F."/>
            <person name="Schobel S."/>
            <person name="Town C.D."/>
        </authorList>
    </citation>
    <scope>GENOME REANNOTATION</scope>
    <source>
        <strain>cv. Columbia</strain>
    </source>
</reference>
<reference key="3">
    <citation type="submission" date="2006-10" db="EMBL/GenBank/DDBJ databases">
        <title>Arabidopsis ORF Clones.</title>
        <authorList>
            <person name="Quinitio C."/>
            <person name="Chen H."/>
            <person name="Kim C.J."/>
            <person name="Shinn P."/>
            <person name="Ecker J.R."/>
        </authorList>
    </citation>
    <scope>NUCLEOTIDE SEQUENCE [LARGE SCALE MRNA]</scope>
    <source>
        <strain>cv. Columbia</strain>
    </source>
</reference>
<reference key="4">
    <citation type="submission" date="2002-03" db="EMBL/GenBank/DDBJ databases">
        <title>Full-length cDNA from Arabidopsis thaliana.</title>
        <authorList>
            <person name="Brover V.V."/>
            <person name="Troukhan M.E."/>
            <person name="Alexandrov N.A."/>
            <person name="Lu Y.-P."/>
            <person name="Flavell R.B."/>
            <person name="Feldmann K.A."/>
        </authorList>
    </citation>
    <scope>NUCLEOTIDE SEQUENCE [LARGE SCALE MRNA]</scope>
</reference>
<reference key="5">
    <citation type="journal article" date="2006" name="Plant J.">
        <title>The WAG1 and WAG2 protein kinases negatively regulate root waving in Arabidopsis.</title>
        <authorList>
            <person name="Santner A.A."/>
            <person name="Watson J.C."/>
        </authorList>
    </citation>
    <scope>FUNCTION</scope>
    <scope>TISSUE SPECIFICITY</scope>
    <scope>DISRUPTION PHENOTYPE</scope>
</reference>
<reference key="6">
    <citation type="journal article" date="2008" name="Proc. Natl. Acad. Sci. U.S.A.">
        <title>NPY genes and AGC kinases define two key steps in auxin-mediated organogenesis in Arabidopsis.</title>
        <authorList>
            <person name="Cheng Y."/>
            <person name="Qin G."/>
            <person name="Dai X."/>
            <person name="Zhao Y."/>
        </authorList>
    </citation>
    <scope>FUNCTION</scope>
    <scope>DEVELOPMENTAL STAGE</scope>
</reference>
<reference key="7">
    <citation type="journal article" date="2010" name="Development">
        <title>Plasma membrane-bound AGC3 kinases phosphorylate PIN auxin carriers at TPRXS(N/S) motifs to direct apical PIN recycling.</title>
        <authorList>
            <person name="Dhonukshe P."/>
            <person name="Huang F."/>
            <person name="Galvan-Ampudia C.S."/>
            <person name="Mahonen A.P."/>
            <person name="Kleine-Vehn J."/>
            <person name="Xu J."/>
            <person name="Quint A."/>
            <person name="Prasad K."/>
            <person name="Friml J."/>
            <person name="Scheres B."/>
            <person name="Offringa R."/>
        </authorList>
    </citation>
    <scope>FUNCTION</scope>
    <scope>SUBCELLULAR LOCATION</scope>
</reference>
<comment type="function">
    <text evidence="3 4 5">Serine/threonine-protein kinase involved in the regulation of auxin signaling. Acts as a positive regulator of cellular auxin efflux and regulates organ development by enhancing PIN-mediated polar auxin transport. Phosphorylates conserved serine residues in the PIN auxin efflux carriers. Phosphorylation of PIN proteins is required and sufficient for apical-basal PIN polarity that enables directional intercellular auxin fluxes, which mediate differential growth, tissue patterning and organogenesis. Acts as a suppressor of root waving.</text>
</comment>
<comment type="catalytic activity">
    <reaction>
        <text>L-seryl-[protein] + ATP = O-phospho-L-seryl-[protein] + ADP + H(+)</text>
        <dbReference type="Rhea" id="RHEA:17989"/>
        <dbReference type="Rhea" id="RHEA-COMP:9863"/>
        <dbReference type="Rhea" id="RHEA-COMP:11604"/>
        <dbReference type="ChEBI" id="CHEBI:15378"/>
        <dbReference type="ChEBI" id="CHEBI:29999"/>
        <dbReference type="ChEBI" id="CHEBI:30616"/>
        <dbReference type="ChEBI" id="CHEBI:83421"/>
        <dbReference type="ChEBI" id="CHEBI:456216"/>
        <dbReference type="EC" id="2.7.11.1"/>
    </reaction>
</comment>
<comment type="catalytic activity">
    <reaction>
        <text>L-threonyl-[protein] + ATP = O-phospho-L-threonyl-[protein] + ADP + H(+)</text>
        <dbReference type="Rhea" id="RHEA:46608"/>
        <dbReference type="Rhea" id="RHEA-COMP:11060"/>
        <dbReference type="Rhea" id="RHEA-COMP:11605"/>
        <dbReference type="ChEBI" id="CHEBI:15378"/>
        <dbReference type="ChEBI" id="CHEBI:30013"/>
        <dbReference type="ChEBI" id="CHEBI:30616"/>
        <dbReference type="ChEBI" id="CHEBI:61977"/>
        <dbReference type="ChEBI" id="CHEBI:456216"/>
        <dbReference type="EC" id="2.7.11.1"/>
    </reaction>
</comment>
<comment type="subcellular location">
    <subcellularLocation>
        <location evidence="5">Cytoplasm</location>
        <location evidence="5">Cytosol</location>
    </subcellularLocation>
    <text>Targeted to the cell periphery.</text>
</comment>
<comment type="tissue specificity">
    <text evidence="3">Expressed in root tips, lateral root primordia and emerging true leaf primordia.</text>
</comment>
<comment type="developmental stage">
    <text evidence="4">Expressed throughout embryogenesis with higher expression in the cotyledon primordia at heart stages.</text>
</comment>
<comment type="disruption phenotype">
    <text evidence="3">Enhanced root waving when grown on agar plates.</text>
</comment>
<comment type="miscellaneous">
    <text evidence="6">Over-expression of WAG1 induces a basal-to-apical shift in PIN1, PIN2 and PIN4 localization, resulting in the loss of auxin gradients and strong defects in embryo and seedling roots.</text>
</comment>
<comment type="similarity">
    <text evidence="1">Belongs to the protein kinase superfamily. Ser/Thr protein kinase family.</text>
</comment>
<name>WAG2_ARATH</name>
<sequence>MEQEDFYFPDTDLDLSFTSTTTDRTFASSSARTSLTLSFNDRLSTSSAVTTSSTSSSSVNHRRHDPHWSAIKSAKLLSSDGNIHLRHLKLIRHLGTGNLGRVFLCNLRDSSARFALKVIDRNCLTTEKKLSQVETEAEILSLLDHPFLPTLYARIDESHYTCLLIDYAPNGDLHSLLRKQPGNRLPIQPVRFFAAEVLVALEYLHAMGIVYRDLKPENVLLREDGHVMLSDFDLCFKSDVVPTFKSRRYRRSSSSPSLRRRRSGCFSVAAEKKYEREEIVSEFAAEPVTAFSRSCVGTHEYLAPELVSGNGHGSGVDWWAFGIFLYELLYGTTPFKGESKEQTLRNIVSTTKTASFHMDGDLDEARDLIEKLLVKDPRKRLGCARGAQDIKRHPFFDGIKWPLIRHYKPPEEVRGLVIKKSTRPHASHVIAVSPRRRKSFLWRALSYLLRGKSSSGGSKNQSNSNYYHYVGKSYASRKRV</sequence>